<feature type="signal peptide" evidence="2">
    <location>
        <begin position="1"/>
        <end position="25"/>
    </location>
</feature>
<feature type="chain" id="PRO_0000451309" description="Evasin P1183" evidence="2">
    <location>
        <begin position="26"/>
        <end position="115"/>
    </location>
</feature>
<feature type="glycosylation site" description="N-linked (GlcNAc...) asparagine" evidence="3">
    <location>
        <position position="45"/>
    </location>
</feature>
<feature type="glycosylation site" description="N-linked (GlcNAc...) asparagine" evidence="3">
    <location>
        <position position="72"/>
    </location>
</feature>
<feature type="glycosylation site" description="N-linked (GlcNAc...) asparagine" evidence="3">
    <location>
        <position position="103"/>
    </location>
</feature>
<feature type="disulfide bond" evidence="1">
    <location>
        <begin position="38"/>
        <end position="58"/>
    </location>
</feature>
<feature type="disulfide bond" evidence="1">
    <location>
        <begin position="54"/>
        <end position="94"/>
    </location>
</feature>
<feature type="disulfide bond" evidence="1">
    <location>
        <begin position="70"/>
        <end position="99"/>
    </location>
</feature>
<feature type="disulfide bond" evidence="1">
    <location>
        <begin position="89"/>
        <end position="108"/>
    </location>
</feature>
<evidence type="ECO:0000250" key="1">
    <source>
        <dbReference type="UniProtKB" id="P0C8E7"/>
    </source>
</evidence>
<evidence type="ECO:0000255" key="2"/>
<evidence type="ECO:0000255" key="3">
    <source>
        <dbReference type="PROSITE-ProRule" id="PRU00498"/>
    </source>
</evidence>
<evidence type="ECO:0000269" key="4">
    <source>
    </source>
</evidence>
<evidence type="ECO:0000303" key="5">
    <source>
    </source>
</evidence>
<evidence type="ECO:0000305" key="6"/>
<evidence type="ECO:0000312" key="7">
    <source>
        <dbReference type="EMBL" id="JAC29608.1"/>
    </source>
</evidence>
<accession>A0A023G9N9</accession>
<reference evidence="7" key="1">
    <citation type="journal article" date="2014" name="Parasit. Vectors">
        <title>The sialotranscriptome of Amblyomma triste, Amblyomma parvum and Amblyomma cajennense ticks, uncovered by 454-based RNA-seq.</title>
        <authorList>
            <person name="Garcia G.R."/>
            <person name="Gardinassi L.G."/>
            <person name="Ribeiro J.M."/>
            <person name="Anatriello E."/>
            <person name="Ferreira B.R."/>
            <person name="Moreira H.N."/>
            <person name="Mafra C."/>
            <person name="Martins M.M."/>
            <person name="Szabo M.P."/>
            <person name="de Miranda-Santos I.K."/>
            <person name="Maruyama S.R."/>
        </authorList>
    </citation>
    <scope>NUCLEOTIDE SEQUENCE [LARGE SCALE MRNA]</scope>
    <source>
        <strain evidence="7">Mato Grasso do Sul</strain>
        <tissue evidence="7">Salivary gland</tissue>
    </source>
</reference>
<reference evidence="6" key="2">
    <citation type="journal article" date="2017" name="Sci. Rep.">
        <title>Yeast surface display identifies a family of evasins from ticks with novel polyvalent CC chemokine-binding activities.</title>
        <authorList>
            <person name="Singh K."/>
            <person name="Davies G."/>
            <person name="Alenazi Y."/>
            <person name="Eaton J.R.O."/>
            <person name="Kawamura A."/>
            <person name="Bhattacharya S."/>
        </authorList>
    </citation>
    <scope>FUNCTION</scope>
</reference>
<sequence length="115" mass="12982">MTRNWSFRVIFVSAMWCALLKFATLEAPKDDFEYDGGCPFVVLDNGTHVKPAGCSHLCNGAPETLDNIECYNVTEEVAKRMTPGIPYACWLGWCSKGECKRDNRTEVCYRGSEEE</sequence>
<protein>
    <recommendedName>
        <fullName evidence="5">Evasin P1183</fullName>
    </recommendedName>
</protein>
<organism>
    <name type="scientific">Amblyomma triste</name>
    <name type="common">Neotropical tick</name>
    <dbReference type="NCBI Taxonomy" id="251400"/>
    <lineage>
        <taxon>Eukaryota</taxon>
        <taxon>Metazoa</taxon>
        <taxon>Ecdysozoa</taxon>
        <taxon>Arthropoda</taxon>
        <taxon>Chelicerata</taxon>
        <taxon>Arachnida</taxon>
        <taxon>Acari</taxon>
        <taxon>Parasitiformes</taxon>
        <taxon>Ixodida</taxon>
        <taxon>Ixodoidea</taxon>
        <taxon>Ixodidae</taxon>
        <taxon>Amblyomminae</taxon>
        <taxon>Amblyomma</taxon>
    </lineage>
</organism>
<comment type="function">
    <text evidence="4">Salivary chemokine-binding protein which binds to host chemokine CCL2.</text>
</comment>
<comment type="subcellular location">
    <subcellularLocation>
        <location evidence="6">Secreted</location>
    </subcellularLocation>
</comment>
<comment type="sequence caution" evidence="6">
    <conflict type="erroneous initiation">
        <sequence resource="EMBL-CDS" id="JAC29608"/>
    </conflict>
    <text>Extended N-terminus.</text>
</comment>
<proteinExistence type="inferred from homology"/>
<name>E1183_AMBTT</name>
<dbReference type="EMBL" id="GBBM01005810">
    <property type="protein sequence ID" value="JAC29608.1"/>
    <property type="status" value="ALT_INIT"/>
    <property type="molecule type" value="mRNA"/>
</dbReference>
<dbReference type="SMR" id="A0A023G9N9"/>
<dbReference type="GO" id="GO:0005576">
    <property type="term" value="C:extracellular region"/>
    <property type="evidence" value="ECO:0007669"/>
    <property type="project" value="UniProtKB-SubCell"/>
</dbReference>
<dbReference type="GO" id="GO:0019957">
    <property type="term" value="F:C-C chemokine binding"/>
    <property type="evidence" value="ECO:0000314"/>
    <property type="project" value="UniProtKB"/>
</dbReference>
<dbReference type="Gene3D" id="2.30.130.100">
    <property type="match status" value="1"/>
</dbReference>
<dbReference type="InterPro" id="IPR045797">
    <property type="entry name" value="EVA_Class_A"/>
</dbReference>
<dbReference type="Pfam" id="PF19429">
    <property type="entry name" value="EVA_Class_A"/>
    <property type="match status" value="1"/>
</dbReference>
<keyword id="KW-1015">Disulfide bond</keyword>
<keyword id="KW-0325">Glycoprotein</keyword>
<keyword id="KW-0964">Secreted</keyword>
<keyword id="KW-0732">Signal</keyword>